<protein>
    <recommendedName>
        <fullName evidence="1">NADPH-dependent 7-cyano-7-deazaguanine reductase</fullName>
        <ecNumber evidence="1">1.7.1.13</ecNumber>
    </recommendedName>
    <alternativeName>
        <fullName evidence="1">7-cyano-7-carbaguanine reductase</fullName>
    </alternativeName>
    <alternativeName>
        <fullName evidence="1">NADPH-dependent nitrile oxidoreductase</fullName>
    </alternativeName>
    <alternativeName>
        <fullName evidence="1">PreQ(0) reductase</fullName>
    </alternativeName>
</protein>
<feature type="chain" id="PRO_1000213066" description="NADPH-dependent 7-cyano-7-deazaguanine reductase">
    <location>
        <begin position="1"/>
        <end position="282"/>
    </location>
</feature>
<feature type="active site" description="Thioimide intermediate" evidence="1">
    <location>
        <position position="190"/>
    </location>
</feature>
<feature type="active site" description="Proton donor" evidence="1">
    <location>
        <position position="197"/>
    </location>
</feature>
<feature type="binding site" evidence="1">
    <location>
        <begin position="88"/>
        <end position="90"/>
    </location>
    <ligand>
        <name>substrate</name>
    </ligand>
</feature>
<feature type="binding site" evidence="1">
    <location>
        <begin position="90"/>
        <end position="91"/>
    </location>
    <ligand>
        <name>NADPH</name>
        <dbReference type="ChEBI" id="CHEBI:57783"/>
    </ligand>
</feature>
<feature type="binding site" evidence="1">
    <location>
        <begin position="229"/>
        <end position="230"/>
    </location>
    <ligand>
        <name>substrate</name>
    </ligand>
</feature>
<feature type="binding site" evidence="1">
    <location>
        <begin position="258"/>
        <end position="259"/>
    </location>
    <ligand>
        <name>NADPH</name>
        <dbReference type="ChEBI" id="CHEBI:57783"/>
    </ligand>
</feature>
<dbReference type="EC" id="1.7.1.13" evidence="1"/>
<dbReference type="EMBL" id="CP000970">
    <property type="protein sequence ID" value="ACB19943.1"/>
    <property type="molecule type" value="Genomic_DNA"/>
</dbReference>
<dbReference type="RefSeq" id="WP_000100411.1">
    <property type="nucleotide sequence ID" value="NC_010498.1"/>
</dbReference>
<dbReference type="SMR" id="B1LQY7"/>
<dbReference type="KEGG" id="ecm:EcSMS35_2934"/>
<dbReference type="HOGENOM" id="CLU_054738_0_0_6"/>
<dbReference type="UniPathway" id="UPA00392"/>
<dbReference type="Proteomes" id="UP000007011">
    <property type="component" value="Chromosome"/>
</dbReference>
<dbReference type="GO" id="GO:0005737">
    <property type="term" value="C:cytoplasm"/>
    <property type="evidence" value="ECO:0007669"/>
    <property type="project" value="UniProtKB-SubCell"/>
</dbReference>
<dbReference type="GO" id="GO:0033739">
    <property type="term" value="F:preQ1 synthase activity"/>
    <property type="evidence" value="ECO:0007669"/>
    <property type="project" value="UniProtKB-UniRule"/>
</dbReference>
<dbReference type="GO" id="GO:0008616">
    <property type="term" value="P:queuosine biosynthetic process"/>
    <property type="evidence" value="ECO:0007669"/>
    <property type="project" value="UniProtKB-UniRule"/>
</dbReference>
<dbReference type="GO" id="GO:0006400">
    <property type="term" value="P:tRNA modification"/>
    <property type="evidence" value="ECO:0007669"/>
    <property type="project" value="UniProtKB-UniRule"/>
</dbReference>
<dbReference type="FunFam" id="3.30.1130.10:FF:000004">
    <property type="entry name" value="NADPH-dependent 7-cyano-7-deazaguanine reductase"/>
    <property type="match status" value="1"/>
</dbReference>
<dbReference type="FunFam" id="3.30.1130.10:FF:000006">
    <property type="entry name" value="NADPH-dependent 7-cyano-7-deazaguanine reductase"/>
    <property type="match status" value="1"/>
</dbReference>
<dbReference type="Gene3D" id="3.30.1130.10">
    <property type="match status" value="2"/>
</dbReference>
<dbReference type="HAMAP" id="MF_00817">
    <property type="entry name" value="QueF_type2"/>
    <property type="match status" value="1"/>
</dbReference>
<dbReference type="InterPro" id="IPR043133">
    <property type="entry name" value="GTP-CH-I_C/QueF"/>
</dbReference>
<dbReference type="InterPro" id="IPR050084">
    <property type="entry name" value="NADPH_dep_7-cyano-7-deazaG_red"/>
</dbReference>
<dbReference type="InterPro" id="IPR029500">
    <property type="entry name" value="QueF"/>
</dbReference>
<dbReference type="InterPro" id="IPR029139">
    <property type="entry name" value="QueF_N"/>
</dbReference>
<dbReference type="InterPro" id="IPR016428">
    <property type="entry name" value="QueF_type2"/>
</dbReference>
<dbReference type="NCBIfam" id="TIGR03138">
    <property type="entry name" value="QueF"/>
    <property type="match status" value="1"/>
</dbReference>
<dbReference type="PANTHER" id="PTHR34354">
    <property type="entry name" value="NADPH-DEPENDENT 7-CYANO-7-DEAZAGUANINE REDUCTASE"/>
    <property type="match status" value="1"/>
</dbReference>
<dbReference type="PANTHER" id="PTHR34354:SF1">
    <property type="entry name" value="NADPH-DEPENDENT 7-CYANO-7-DEAZAGUANINE REDUCTASE"/>
    <property type="match status" value="1"/>
</dbReference>
<dbReference type="Pfam" id="PF14489">
    <property type="entry name" value="QueF"/>
    <property type="match status" value="1"/>
</dbReference>
<dbReference type="Pfam" id="PF14819">
    <property type="entry name" value="QueF_N"/>
    <property type="match status" value="1"/>
</dbReference>
<dbReference type="PIRSF" id="PIRSF004750">
    <property type="entry name" value="Nitrile_oxidored_YqcD_prd"/>
    <property type="match status" value="1"/>
</dbReference>
<dbReference type="SUPFAM" id="SSF55620">
    <property type="entry name" value="Tetrahydrobiopterin biosynthesis enzymes-like"/>
    <property type="match status" value="1"/>
</dbReference>
<accession>B1LQY7</accession>
<sequence>MSSYANHQALAGLTLGKSTDYRDTYDASLLQGVPRSLNRDPLGLKADNLPFHGTDIWTLYELSWLNAKGLPQVAVGHVELDYTSANLIESKSFKLYLNSFNQTRFNNWDEVRQTLERDLSTCAQGKVSVALYRLDELEGQPIGHFNGTCIDDQDITIDNYEFTTDYLENATSGEKVVEETLVSHLLKSNCLITHQPDWGSIQIQYRGRQIDREKLLRYLVSFRHHNEFHEQCVERIFNDLLRFCQPEKLSVYARYTRRGGLDINPWRSNSDFVPSTTRLVRQ</sequence>
<comment type="function">
    <text evidence="1">Catalyzes the NADPH-dependent reduction of 7-cyano-7-deazaguanine (preQ0) to 7-aminomethyl-7-deazaguanine (preQ1).</text>
</comment>
<comment type="catalytic activity">
    <reaction evidence="1">
        <text>7-aminomethyl-7-carbaguanine + 2 NADP(+) = 7-cyano-7-deazaguanine + 2 NADPH + 3 H(+)</text>
        <dbReference type="Rhea" id="RHEA:13409"/>
        <dbReference type="ChEBI" id="CHEBI:15378"/>
        <dbReference type="ChEBI" id="CHEBI:45075"/>
        <dbReference type="ChEBI" id="CHEBI:57783"/>
        <dbReference type="ChEBI" id="CHEBI:58349"/>
        <dbReference type="ChEBI" id="CHEBI:58703"/>
        <dbReference type="EC" id="1.7.1.13"/>
    </reaction>
</comment>
<comment type="pathway">
    <text evidence="1">tRNA modification; tRNA-queuosine biosynthesis.</text>
</comment>
<comment type="subunit">
    <text evidence="1">Homodimer.</text>
</comment>
<comment type="subcellular location">
    <subcellularLocation>
        <location evidence="1">Cytoplasm</location>
    </subcellularLocation>
</comment>
<comment type="similarity">
    <text evidence="1">Belongs to the GTP cyclohydrolase I family. QueF type 2 subfamily.</text>
</comment>
<reference key="1">
    <citation type="journal article" date="2008" name="J. Bacteriol.">
        <title>Insights into the environmental resistance gene pool from the genome sequence of the multidrug-resistant environmental isolate Escherichia coli SMS-3-5.</title>
        <authorList>
            <person name="Fricke W.F."/>
            <person name="Wright M.S."/>
            <person name="Lindell A.H."/>
            <person name="Harkins D.M."/>
            <person name="Baker-Austin C."/>
            <person name="Ravel J."/>
            <person name="Stepanauskas R."/>
        </authorList>
    </citation>
    <scope>NUCLEOTIDE SEQUENCE [LARGE SCALE GENOMIC DNA]</scope>
    <source>
        <strain>SMS-3-5 / SECEC</strain>
    </source>
</reference>
<name>QUEF_ECOSM</name>
<gene>
    <name evidence="1" type="primary">queF</name>
    <name type="ordered locus">EcSMS35_2934</name>
</gene>
<organism>
    <name type="scientific">Escherichia coli (strain SMS-3-5 / SECEC)</name>
    <dbReference type="NCBI Taxonomy" id="439855"/>
    <lineage>
        <taxon>Bacteria</taxon>
        <taxon>Pseudomonadati</taxon>
        <taxon>Pseudomonadota</taxon>
        <taxon>Gammaproteobacteria</taxon>
        <taxon>Enterobacterales</taxon>
        <taxon>Enterobacteriaceae</taxon>
        <taxon>Escherichia</taxon>
    </lineage>
</organism>
<keyword id="KW-0963">Cytoplasm</keyword>
<keyword id="KW-0521">NADP</keyword>
<keyword id="KW-0560">Oxidoreductase</keyword>
<keyword id="KW-0671">Queuosine biosynthesis</keyword>
<evidence type="ECO:0000255" key="1">
    <source>
        <dbReference type="HAMAP-Rule" id="MF_00817"/>
    </source>
</evidence>
<proteinExistence type="inferred from homology"/>